<evidence type="ECO:0000250" key="1"/>
<evidence type="ECO:0000255" key="2"/>
<evidence type="ECO:0000305" key="3"/>
<feature type="chain" id="PRO_0000175094" description="Probable deoxycytidine kinase FPV151">
    <location>
        <begin position="1"/>
        <end position="235"/>
    </location>
</feature>
<feature type="active site" description="Proton acceptor" evidence="2">
    <location>
        <position position="104"/>
    </location>
</feature>
<feature type="binding site" evidence="1">
    <location>
        <begin position="30"/>
        <end position="38"/>
    </location>
    <ligand>
        <name>ATP</name>
        <dbReference type="ChEBI" id="CHEBI:30616"/>
    </ligand>
</feature>
<feature type="binding site" evidence="1">
    <location>
        <position position="53"/>
    </location>
    <ligand>
        <name>substrate</name>
    </ligand>
</feature>
<feature type="binding site" evidence="1">
    <location>
        <position position="68"/>
    </location>
    <ligand>
        <name>substrate</name>
    </ligand>
</feature>
<feature type="binding site" evidence="1">
    <location>
        <position position="79"/>
    </location>
    <ligand>
        <name>substrate</name>
    </ligand>
</feature>
<feature type="binding site" evidence="1">
    <location>
        <position position="105"/>
    </location>
    <ligand>
        <name>substrate</name>
    </ligand>
</feature>
<feature type="binding site" evidence="1">
    <location>
        <position position="110"/>
    </location>
    <ligand>
        <name>substrate</name>
    </ligand>
</feature>
<feature type="binding site" evidence="1">
    <location>
        <position position="172"/>
    </location>
    <ligand>
        <name>substrate</name>
    </ligand>
</feature>
<gene>
    <name type="ordered locus">FPV151</name>
</gene>
<proteinExistence type="inferred from homology"/>
<dbReference type="EC" id="2.7.1.74"/>
<dbReference type="EMBL" id="AF198100">
    <property type="protein sequence ID" value="AAF44495.1"/>
    <property type="molecule type" value="Genomic_DNA"/>
</dbReference>
<dbReference type="RefSeq" id="NP_039114.1">
    <property type="nucleotide sequence ID" value="NC_002188.1"/>
</dbReference>
<dbReference type="SMR" id="Q9J579"/>
<dbReference type="GeneID" id="1486699"/>
<dbReference type="KEGG" id="vg:1486699"/>
<dbReference type="Proteomes" id="UP000008597">
    <property type="component" value="Segment"/>
</dbReference>
<dbReference type="GO" id="GO:0005524">
    <property type="term" value="F:ATP binding"/>
    <property type="evidence" value="ECO:0007669"/>
    <property type="project" value="UniProtKB-KW"/>
</dbReference>
<dbReference type="GO" id="GO:0004137">
    <property type="term" value="F:deoxycytidine kinase activity"/>
    <property type="evidence" value="ECO:0007669"/>
    <property type="project" value="UniProtKB-EC"/>
</dbReference>
<dbReference type="CDD" id="cd01673">
    <property type="entry name" value="dNK"/>
    <property type="match status" value="1"/>
</dbReference>
<dbReference type="Gene3D" id="3.40.50.300">
    <property type="entry name" value="P-loop containing nucleotide triphosphate hydrolases"/>
    <property type="match status" value="1"/>
</dbReference>
<dbReference type="InterPro" id="IPR002624">
    <property type="entry name" value="DCK/DGK"/>
</dbReference>
<dbReference type="InterPro" id="IPR050566">
    <property type="entry name" value="Deoxyribonucleoside_kinase"/>
</dbReference>
<dbReference type="InterPro" id="IPR031314">
    <property type="entry name" value="DNK_dom"/>
</dbReference>
<dbReference type="InterPro" id="IPR027417">
    <property type="entry name" value="P-loop_NTPase"/>
</dbReference>
<dbReference type="PANTHER" id="PTHR10513:SF35">
    <property type="entry name" value="DEOXYADENOSINE KINASE"/>
    <property type="match status" value="1"/>
</dbReference>
<dbReference type="PANTHER" id="PTHR10513">
    <property type="entry name" value="DEOXYNUCLEOSIDE KINASE"/>
    <property type="match status" value="1"/>
</dbReference>
<dbReference type="Pfam" id="PF01712">
    <property type="entry name" value="dNK"/>
    <property type="match status" value="1"/>
</dbReference>
<dbReference type="PIRSF" id="PIRSF000705">
    <property type="entry name" value="DNK"/>
    <property type="match status" value="1"/>
</dbReference>
<dbReference type="SUPFAM" id="SSF52540">
    <property type="entry name" value="P-loop containing nucleoside triphosphate hydrolases"/>
    <property type="match status" value="1"/>
</dbReference>
<organismHost>
    <name type="scientific">Vertebrata</name>
    <dbReference type="NCBI Taxonomy" id="7742"/>
</organismHost>
<name>DCK2_FOWPN</name>
<reference key="1">
    <citation type="journal article" date="2000" name="J. Virol.">
        <title>The genome of fowlpox virus.</title>
        <authorList>
            <person name="Afonso C.L."/>
            <person name="Tulman E.R."/>
            <person name="Lu Z."/>
            <person name="Zsak L."/>
            <person name="Kutish G.F."/>
            <person name="Rock D.L."/>
        </authorList>
    </citation>
    <scope>NUCLEOTIDE SEQUENCE [LARGE SCALE GENOMIC DNA]</scope>
</reference>
<organism>
    <name type="scientific">Fowlpox virus (strain NVSL)</name>
    <name type="common">FPV</name>
    <dbReference type="NCBI Taxonomy" id="928301"/>
    <lineage>
        <taxon>Viruses</taxon>
        <taxon>Varidnaviria</taxon>
        <taxon>Bamfordvirae</taxon>
        <taxon>Nucleocytoviricota</taxon>
        <taxon>Pokkesviricetes</taxon>
        <taxon>Chitovirales</taxon>
        <taxon>Poxviridae</taxon>
        <taxon>Chordopoxvirinae</taxon>
        <taxon>Avipoxvirus</taxon>
        <taxon>Fowlpox virus</taxon>
    </lineage>
</organism>
<keyword id="KW-0067">ATP-binding</keyword>
<keyword id="KW-0418">Kinase</keyword>
<keyword id="KW-0547">Nucleotide-binding</keyword>
<keyword id="KW-1185">Reference proteome</keyword>
<keyword id="KW-0808">Transferase</keyword>
<accession>Q9J579</accession>
<comment type="catalytic activity">
    <reaction>
        <text>2'-deoxycytidine + a ribonucleoside 5'-triphosphate = dCMP + a ribonucleoside 5'-diphosphate + H(+)</text>
        <dbReference type="Rhea" id="RHEA:20061"/>
        <dbReference type="ChEBI" id="CHEBI:15378"/>
        <dbReference type="ChEBI" id="CHEBI:15698"/>
        <dbReference type="ChEBI" id="CHEBI:57566"/>
        <dbReference type="ChEBI" id="CHEBI:57930"/>
        <dbReference type="ChEBI" id="CHEBI:61557"/>
        <dbReference type="EC" id="2.7.1.74"/>
    </reaction>
</comment>
<comment type="similarity">
    <text evidence="3">Belongs to the DCK/DGK family.</text>
</comment>
<protein>
    <recommendedName>
        <fullName>Probable deoxycytidine kinase FPV151</fullName>
        <shortName>dCK</shortName>
        <ecNumber>2.7.1.74</ecNumber>
    </recommendedName>
</protein>
<sequence>MAFQELCCSNLLKFENCSLLETHKKISIEGNISAGKSTLINILSDNGYNVVQEPLEQWRGNNLLDKLYKDPSRWAYTFQSHAFWTRTKTYIDALNKNKGNIILERSVFSDKYIFATALHDIGYIDDTEWNIYNEYSKWMTEFMDIKIDGIIYLKTSPDICYKRMLNRARHEENTVKIDYLNLLHDKHEKWLSENNEHEFKVPVLEINGDGDFIDDSNRQSSILSNIYDFISELYI</sequence>